<accession>D4A7C0</accession>
<name>GPN2_RAT</name>
<feature type="initiator methionine" description="Removed" evidence="2">
    <location>
        <position position="1"/>
    </location>
</feature>
<feature type="chain" id="PRO_0000394804" description="GPN-loop GTPase 2">
    <location>
        <begin position="2"/>
        <end position="310"/>
    </location>
</feature>
<feature type="short sequence motif" description="Gly-Pro-Asn (GPN)-loop; involved in dimer interface" evidence="3">
    <location>
        <begin position="76"/>
        <end position="78"/>
    </location>
</feature>
<feature type="binding site" evidence="3">
    <location>
        <begin position="19"/>
        <end position="24"/>
    </location>
    <ligand>
        <name>GTP</name>
        <dbReference type="ChEBI" id="CHEBI:37565"/>
    </ligand>
</feature>
<feature type="binding site" evidence="3">
    <location>
        <begin position="178"/>
        <end position="181"/>
    </location>
    <ligand>
        <name>GTP</name>
        <dbReference type="ChEBI" id="CHEBI:37565"/>
    </ligand>
</feature>
<feature type="site" description="Stabilizes the phosphate intermediate; shared with dimeric partner" evidence="3">
    <location>
        <position position="78"/>
    </location>
</feature>
<feature type="modified residue" description="N-acetylalanine" evidence="2">
    <location>
        <position position="2"/>
    </location>
</feature>
<comment type="function">
    <text evidence="1">Small GTPase required for proper localization of RNA polymerase II and III (RNAPII and RNAPIII). May act at an RNAP assembly step prior to nuclear import.</text>
</comment>
<comment type="subunit">
    <text evidence="1 2">Heterodimers with GPN1 or GPN3. Binds to RNA polymerase II (RNAPII).</text>
</comment>
<comment type="similarity">
    <text evidence="4">Belongs to the GPN-loop GTPase family.</text>
</comment>
<organism>
    <name type="scientific">Rattus norvegicus</name>
    <name type="common">Rat</name>
    <dbReference type="NCBI Taxonomy" id="10116"/>
    <lineage>
        <taxon>Eukaryota</taxon>
        <taxon>Metazoa</taxon>
        <taxon>Chordata</taxon>
        <taxon>Craniata</taxon>
        <taxon>Vertebrata</taxon>
        <taxon>Euteleostomi</taxon>
        <taxon>Mammalia</taxon>
        <taxon>Eutheria</taxon>
        <taxon>Euarchontoglires</taxon>
        <taxon>Glires</taxon>
        <taxon>Rodentia</taxon>
        <taxon>Myomorpha</taxon>
        <taxon>Muroidea</taxon>
        <taxon>Muridae</taxon>
        <taxon>Murinae</taxon>
        <taxon>Rattus</taxon>
    </lineage>
</organism>
<proteinExistence type="inferred from homology"/>
<keyword id="KW-0007">Acetylation</keyword>
<keyword id="KW-0342">GTP-binding</keyword>
<keyword id="KW-0378">Hydrolase</keyword>
<keyword id="KW-0547">Nucleotide-binding</keyword>
<keyword id="KW-1185">Reference proteome</keyword>
<gene>
    <name evidence="2" type="primary">Gpn2</name>
    <name evidence="2" type="synonym">Atpbd1B</name>
</gene>
<dbReference type="EMBL" id="AABR03040772">
    <property type="status" value="NOT_ANNOTATED_CDS"/>
    <property type="molecule type" value="Genomic_DNA"/>
</dbReference>
<dbReference type="RefSeq" id="NP_001257888.1">
    <property type="nucleotide sequence ID" value="NM_001270959.1"/>
</dbReference>
<dbReference type="SMR" id="D4A7C0"/>
<dbReference type="FunCoup" id="D4A7C0">
    <property type="interactions" value="3039"/>
</dbReference>
<dbReference type="STRING" id="10116.ENSRNOP00000009275"/>
<dbReference type="GlyGen" id="D4A7C0">
    <property type="glycosylation" value="1 site"/>
</dbReference>
<dbReference type="PhosphoSitePlus" id="D4A7C0"/>
<dbReference type="PaxDb" id="10116-ENSRNOP00000009275"/>
<dbReference type="PeptideAtlas" id="D4A7C0"/>
<dbReference type="Ensembl" id="ENSRNOT00000009275.8">
    <property type="protein sequence ID" value="ENSRNOP00000009275.4"/>
    <property type="gene ID" value="ENSRNOG00000007083.8"/>
</dbReference>
<dbReference type="GeneID" id="362614"/>
<dbReference type="KEGG" id="rno:362614"/>
<dbReference type="UCSC" id="RGD:1311749">
    <property type="organism name" value="rat"/>
</dbReference>
<dbReference type="AGR" id="RGD:1311749"/>
<dbReference type="CTD" id="54707"/>
<dbReference type="RGD" id="1311749">
    <property type="gene designation" value="Gpn2"/>
</dbReference>
<dbReference type="eggNOG" id="KOG1533">
    <property type="taxonomic scope" value="Eukaryota"/>
</dbReference>
<dbReference type="GeneTree" id="ENSGT00950000183172"/>
<dbReference type="HOGENOM" id="CLU_037460_0_2_1"/>
<dbReference type="InParanoid" id="D4A7C0"/>
<dbReference type="OMA" id="ATHNYFL"/>
<dbReference type="OrthoDB" id="5839at2759"/>
<dbReference type="PhylomeDB" id="D4A7C0"/>
<dbReference type="TreeFam" id="TF300828"/>
<dbReference type="PRO" id="PR:D4A7C0"/>
<dbReference type="Proteomes" id="UP000002494">
    <property type="component" value="Chromosome 5"/>
</dbReference>
<dbReference type="Bgee" id="ENSRNOG00000007083">
    <property type="expression patterns" value="Expressed in spleen and 20 other cell types or tissues"/>
</dbReference>
<dbReference type="GO" id="GO:0005525">
    <property type="term" value="F:GTP binding"/>
    <property type="evidence" value="ECO:0007669"/>
    <property type="project" value="UniProtKB-KW"/>
</dbReference>
<dbReference type="GO" id="GO:0003924">
    <property type="term" value="F:GTPase activity"/>
    <property type="evidence" value="ECO:0000318"/>
    <property type="project" value="GO_Central"/>
</dbReference>
<dbReference type="CDD" id="cd17871">
    <property type="entry name" value="GPN2"/>
    <property type="match status" value="1"/>
</dbReference>
<dbReference type="FunFam" id="3.40.50.300:FF:000338">
    <property type="entry name" value="GPN-loop GTPase 2"/>
    <property type="match status" value="1"/>
</dbReference>
<dbReference type="Gene3D" id="3.40.50.300">
    <property type="entry name" value="P-loop containing nucleotide triphosphate hydrolases"/>
    <property type="match status" value="1"/>
</dbReference>
<dbReference type="InterPro" id="IPR004130">
    <property type="entry name" value="Gpn"/>
</dbReference>
<dbReference type="InterPro" id="IPR030231">
    <property type="entry name" value="Gpn2"/>
</dbReference>
<dbReference type="InterPro" id="IPR027417">
    <property type="entry name" value="P-loop_NTPase"/>
</dbReference>
<dbReference type="PANTHER" id="PTHR21231:SF3">
    <property type="entry name" value="GPN-LOOP GTPASE 2"/>
    <property type="match status" value="1"/>
</dbReference>
<dbReference type="PANTHER" id="PTHR21231">
    <property type="entry name" value="XPA-BINDING PROTEIN 1-RELATED"/>
    <property type="match status" value="1"/>
</dbReference>
<dbReference type="Pfam" id="PF03029">
    <property type="entry name" value="ATP_bind_1"/>
    <property type="match status" value="1"/>
</dbReference>
<dbReference type="SUPFAM" id="SSF52540">
    <property type="entry name" value="P-loop containing nucleoside triphosphate hydrolases"/>
    <property type="match status" value="1"/>
</dbReference>
<reference key="1">
    <citation type="journal article" date="2004" name="Nature">
        <title>Genome sequence of the Brown Norway rat yields insights into mammalian evolution.</title>
        <authorList>
            <person name="Gibbs R.A."/>
            <person name="Weinstock G.M."/>
            <person name="Metzker M.L."/>
            <person name="Muzny D.M."/>
            <person name="Sodergren E.J."/>
            <person name="Scherer S."/>
            <person name="Scott G."/>
            <person name="Steffen D."/>
            <person name="Worley K.C."/>
            <person name="Burch P.E."/>
            <person name="Okwuonu G."/>
            <person name="Hines S."/>
            <person name="Lewis L."/>
            <person name="Deramo C."/>
            <person name="Delgado O."/>
            <person name="Dugan-Rocha S."/>
            <person name="Miner G."/>
            <person name="Morgan M."/>
            <person name="Hawes A."/>
            <person name="Gill R."/>
            <person name="Holt R.A."/>
            <person name="Adams M.D."/>
            <person name="Amanatides P.G."/>
            <person name="Baden-Tillson H."/>
            <person name="Barnstead M."/>
            <person name="Chin S."/>
            <person name="Evans C.A."/>
            <person name="Ferriera S."/>
            <person name="Fosler C."/>
            <person name="Glodek A."/>
            <person name="Gu Z."/>
            <person name="Jennings D."/>
            <person name="Kraft C.L."/>
            <person name="Nguyen T."/>
            <person name="Pfannkoch C.M."/>
            <person name="Sitter C."/>
            <person name="Sutton G.G."/>
            <person name="Venter J.C."/>
            <person name="Woodage T."/>
            <person name="Smith D."/>
            <person name="Lee H.-M."/>
            <person name="Gustafson E."/>
            <person name="Cahill P."/>
            <person name="Kana A."/>
            <person name="Doucette-Stamm L."/>
            <person name="Weinstock K."/>
            <person name="Fechtel K."/>
            <person name="Weiss R.B."/>
            <person name="Dunn D.M."/>
            <person name="Green E.D."/>
            <person name="Blakesley R.W."/>
            <person name="Bouffard G.G."/>
            <person name="De Jong P.J."/>
            <person name="Osoegawa K."/>
            <person name="Zhu B."/>
            <person name="Marra M."/>
            <person name="Schein J."/>
            <person name="Bosdet I."/>
            <person name="Fjell C."/>
            <person name="Jones S."/>
            <person name="Krzywinski M."/>
            <person name="Mathewson C."/>
            <person name="Siddiqui A."/>
            <person name="Wye N."/>
            <person name="McPherson J."/>
            <person name="Zhao S."/>
            <person name="Fraser C.M."/>
            <person name="Shetty J."/>
            <person name="Shatsman S."/>
            <person name="Geer K."/>
            <person name="Chen Y."/>
            <person name="Abramzon S."/>
            <person name="Nierman W.C."/>
            <person name="Havlak P.H."/>
            <person name="Chen R."/>
            <person name="Durbin K.J."/>
            <person name="Egan A."/>
            <person name="Ren Y."/>
            <person name="Song X.-Z."/>
            <person name="Li B."/>
            <person name="Liu Y."/>
            <person name="Qin X."/>
            <person name="Cawley S."/>
            <person name="Cooney A.J."/>
            <person name="D'Souza L.M."/>
            <person name="Martin K."/>
            <person name="Wu J.Q."/>
            <person name="Gonzalez-Garay M.L."/>
            <person name="Jackson A.R."/>
            <person name="Kalafus K.J."/>
            <person name="McLeod M.P."/>
            <person name="Milosavljevic A."/>
            <person name="Virk D."/>
            <person name="Volkov A."/>
            <person name="Wheeler D.A."/>
            <person name="Zhang Z."/>
            <person name="Bailey J.A."/>
            <person name="Eichler E.E."/>
            <person name="Tuzun E."/>
            <person name="Birney E."/>
            <person name="Mongin E."/>
            <person name="Ureta-Vidal A."/>
            <person name="Woodwark C."/>
            <person name="Zdobnov E."/>
            <person name="Bork P."/>
            <person name="Suyama M."/>
            <person name="Torrents D."/>
            <person name="Alexandersson M."/>
            <person name="Trask B.J."/>
            <person name="Young J.M."/>
            <person name="Huang H."/>
            <person name="Wang H."/>
            <person name="Xing H."/>
            <person name="Daniels S."/>
            <person name="Gietzen D."/>
            <person name="Schmidt J."/>
            <person name="Stevens K."/>
            <person name="Vitt U."/>
            <person name="Wingrove J."/>
            <person name="Camara F."/>
            <person name="Mar Alba M."/>
            <person name="Abril J.F."/>
            <person name="Guigo R."/>
            <person name="Smit A."/>
            <person name="Dubchak I."/>
            <person name="Rubin E.M."/>
            <person name="Couronne O."/>
            <person name="Poliakov A."/>
            <person name="Huebner N."/>
            <person name="Ganten D."/>
            <person name="Goesele C."/>
            <person name="Hummel O."/>
            <person name="Kreitler T."/>
            <person name="Lee Y.-A."/>
            <person name="Monti J."/>
            <person name="Schulz H."/>
            <person name="Zimdahl H."/>
            <person name="Himmelbauer H."/>
            <person name="Lehrach H."/>
            <person name="Jacob H.J."/>
            <person name="Bromberg S."/>
            <person name="Gullings-Handley J."/>
            <person name="Jensen-Seaman M.I."/>
            <person name="Kwitek A.E."/>
            <person name="Lazar J."/>
            <person name="Pasko D."/>
            <person name="Tonellato P.J."/>
            <person name="Twigger S."/>
            <person name="Ponting C.P."/>
            <person name="Duarte J.M."/>
            <person name="Rice S."/>
            <person name="Goodstadt L."/>
            <person name="Beatson S.A."/>
            <person name="Emes R.D."/>
            <person name="Winter E.E."/>
            <person name="Webber C."/>
            <person name="Brandt P."/>
            <person name="Nyakatura G."/>
            <person name="Adetobi M."/>
            <person name="Chiaromonte F."/>
            <person name="Elnitski L."/>
            <person name="Eswara P."/>
            <person name="Hardison R.C."/>
            <person name="Hou M."/>
            <person name="Kolbe D."/>
            <person name="Makova K."/>
            <person name="Miller W."/>
            <person name="Nekrutenko A."/>
            <person name="Riemer C."/>
            <person name="Schwartz S."/>
            <person name="Taylor J."/>
            <person name="Yang S."/>
            <person name="Zhang Y."/>
            <person name="Lindpaintner K."/>
            <person name="Andrews T.D."/>
            <person name="Caccamo M."/>
            <person name="Clamp M."/>
            <person name="Clarke L."/>
            <person name="Curwen V."/>
            <person name="Durbin R.M."/>
            <person name="Eyras E."/>
            <person name="Searle S.M."/>
            <person name="Cooper G.M."/>
            <person name="Batzoglou S."/>
            <person name="Brudno M."/>
            <person name="Sidow A."/>
            <person name="Stone E.A."/>
            <person name="Payseur B.A."/>
            <person name="Bourque G."/>
            <person name="Lopez-Otin C."/>
            <person name="Puente X.S."/>
            <person name="Chakrabarti K."/>
            <person name="Chatterji S."/>
            <person name="Dewey C."/>
            <person name="Pachter L."/>
            <person name="Bray N."/>
            <person name="Yap V.B."/>
            <person name="Caspi A."/>
            <person name="Tesler G."/>
            <person name="Pevzner P.A."/>
            <person name="Haussler D."/>
            <person name="Roskin K.M."/>
            <person name="Baertsch R."/>
            <person name="Clawson H."/>
            <person name="Furey T.S."/>
            <person name="Hinrichs A.S."/>
            <person name="Karolchik D."/>
            <person name="Kent W.J."/>
            <person name="Rosenbloom K.R."/>
            <person name="Trumbower H."/>
            <person name="Weirauch M."/>
            <person name="Cooper D.N."/>
            <person name="Stenson P.D."/>
            <person name="Ma B."/>
            <person name="Brent M."/>
            <person name="Arumugam M."/>
            <person name="Shteynberg D."/>
            <person name="Copley R.R."/>
            <person name="Taylor M.S."/>
            <person name="Riethman H."/>
            <person name="Mudunuri U."/>
            <person name="Peterson J."/>
            <person name="Guyer M."/>
            <person name="Felsenfeld A."/>
            <person name="Old S."/>
            <person name="Mockrin S."/>
            <person name="Collins F.S."/>
        </authorList>
    </citation>
    <scope>NUCLEOTIDE SEQUENCE [LARGE SCALE GENOMIC DNA]</scope>
    <source>
        <strain>Brown Norway</strain>
    </source>
</reference>
<sequence length="310" mass="34393">MAGAAPTTAFGQAVIGPPGSGKTTYCLGMSEFLRALGRRVAVVNLDPANEGLPYECAVDVGELVGLGDVMDALRLGPNGGLLYCMEYLEANLDWLRAKLEPLRGHYFLFDCPGQVELCTHHTSLRSIFSQMAQWDLRLTAVHLVDSHYCTDPAKFISVLCTSLATMLHVELPHVNLLSKMDLIEHYGKLAFNLDYYTEVLDLSYLLDHLASDPFFSHYRQLNEKLVQLIEDYSLVSFIPLNIQDKDSIQRVLQAVDKANGYCFGVQEQRSLEALMSAAVGADFHFSSTLGIQEKYLASSDQTAEQEAMQL</sequence>
<protein>
    <recommendedName>
        <fullName evidence="2">GPN-loop GTPase 2</fullName>
    </recommendedName>
    <alternativeName>
        <fullName evidence="2">ATP-binding domain 1 family member B</fullName>
    </alternativeName>
</protein>
<evidence type="ECO:0000250" key="1">
    <source>
        <dbReference type="UniProtKB" id="Q08726"/>
    </source>
</evidence>
<evidence type="ECO:0000250" key="2">
    <source>
        <dbReference type="UniProtKB" id="Q9H9Y4"/>
    </source>
</evidence>
<evidence type="ECO:0000250" key="3">
    <source>
        <dbReference type="UniProtKB" id="Q9UYR9"/>
    </source>
</evidence>
<evidence type="ECO:0000305" key="4"/>